<reference evidence="8" key="1">
    <citation type="journal article" date="1998" name="Science">
        <title>Chromosome 2 sequence of the human malaria parasite Plasmodium falciparum.</title>
        <authorList>
            <person name="Gardner M.J."/>
            <person name="Tettelin H."/>
            <person name="Carucci D.J."/>
            <person name="Cummings L.M."/>
            <person name="Aravind L."/>
            <person name="Koonin E.V."/>
            <person name="Shallom S.J."/>
            <person name="Mason T."/>
            <person name="Yu K."/>
            <person name="Fujii C."/>
            <person name="Pederson J."/>
            <person name="Shen K."/>
            <person name="Jing J."/>
            <person name="Aston C."/>
            <person name="Lai Z."/>
            <person name="Schwartz D.C."/>
            <person name="Pertea M."/>
            <person name="Salzberg S.L."/>
            <person name="Zhou L."/>
            <person name="Sutton G.G."/>
            <person name="Clayton R."/>
            <person name="White O."/>
            <person name="Smith H.O."/>
            <person name="Fraser C.M."/>
            <person name="Adams M.D."/>
            <person name="Venter J.C."/>
            <person name="Hoffman S.L."/>
        </authorList>
    </citation>
    <scope>NUCLEOTIDE SEQUENCE [LARGE SCALE GENOMIC DNA]</scope>
    <source>
        <strain evidence="8">3D7</strain>
    </source>
</reference>
<reference evidence="8" key="2">
    <citation type="journal article" date="2002" name="Nature">
        <title>Genome sequence of the human malaria parasite Plasmodium falciparum.</title>
        <authorList>
            <person name="Gardner M.J."/>
            <person name="Hall N."/>
            <person name="Fung E."/>
            <person name="White O."/>
            <person name="Berriman M."/>
            <person name="Hyman R.W."/>
            <person name="Carlton J.M."/>
            <person name="Pain A."/>
            <person name="Nelson K.E."/>
            <person name="Bowman S."/>
            <person name="Paulsen I.T."/>
            <person name="James K.D."/>
            <person name="Eisen J.A."/>
            <person name="Rutherford K.M."/>
            <person name="Salzberg S.L."/>
            <person name="Craig A."/>
            <person name="Kyes S."/>
            <person name="Chan M.-S."/>
            <person name="Nene V."/>
            <person name="Shallom S.J."/>
            <person name="Suh B."/>
            <person name="Peterson J."/>
            <person name="Angiuoli S."/>
            <person name="Pertea M."/>
            <person name="Allen J."/>
            <person name="Selengut J."/>
            <person name="Haft D."/>
            <person name="Mather M.W."/>
            <person name="Vaidya A.B."/>
            <person name="Martin D.M.A."/>
            <person name="Fairlamb A.H."/>
            <person name="Fraunholz M.J."/>
            <person name="Roos D.S."/>
            <person name="Ralph S.A."/>
            <person name="McFadden G.I."/>
            <person name="Cummings L.M."/>
            <person name="Subramanian G.M."/>
            <person name="Mungall C."/>
            <person name="Venter J.C."/>
            <person name="Carucci D.J."/>
            <person name="Hoffman S.L."/>
            <person name="Newbold C."/>
            <person name="Davis R.W."/>
            <person name="Fraser C.M."/>
            <person name="Barrell B.G."/>
        </authorList>
    </citation>
    <scope>NUCLEOTIDE SEQUENCE [LARGE SCALE GENOMIC DNA]</scope>
    <source>
        <strain evidence="8">3D7</strain>
    </source>
</reference>
<reference evidence="6" key="3">
    <citation type="journal article" date="2019" name="Nat. Commun.">
        <title>A lipid-binding protein mediates rhoptry discharge and invasion in Plasmodium falciparum and Toxoplasma gondii parasites.</title>
        <authorList>
            <person name="Suarez C."/>
            <person name="Lentini G."/>
            <person name="Ramaswamy R."/>
            <person name="Maynadier M."/>
            <person name="Aquilini E."/>
            <person name="Berry-Sterkers L."/>
            <person name="Cipriano M."/>
            <person name="Chen A.L."/>
            <person name="Bradley P."/>
            <person name="Striepen B."/>
            <person name="Boulanger M.J."/>
            <person name="Lebrun M."/>
        </authorList>
    </citation>
    <scope>FUNCTION</scope>
    <scope>SUBCELLULAR LOCATION</scope>
    <scope>DEVELOPMENTAL STAGE</scope>
    <scope>DISRUPTION PHENOTYPE</scope>
</reference>
<reference evidence="6" key="4">
    <citation type="journal article" date="2020" name="Nat. Commun.">
        <title>PfCERLI1 is a conserved rhoptry associated protein essential for Plasmodium falciparum merozoite invasion of erythrocytes.</title>
        <authorList>
            <person name="Liffner B."/>
            <person name="Froelich S."/>
            <person name="Heinemann G.K."/>
            <person name="Liu B."/>
            <person name="Ralph S.A."/>
            <person name="Dixon M.W.A."/>
            <person name="Gilberger T.W."/>
            <person name="Wilson D.W."/>
        </authorList>
    </citation>
    <scope>FUNCTION</scope>
    <scope>SUBCELLULAR LOCATION</scope>
    <scope>DEVELOPMENTAL STAGE</scope>
    <scope>DISRUPTION PHENOTYPE</scope>
</reference>
<keyword id="KW-0968">Cytoplasmic vesicle</keyword>
<keyword id="KW-0472">Membrane</keyword>
<keyword id="KW-1185">Reference proteome</keyword>
<gene>
    <name evidence="5" type="primary">CERLI1</name>
    <name evidence="4" type="synonym">RASP2</name>
    <name evidence="7" type="ORF">PF3D7_0210600</name>
</gene>
<dbReference type="EMBL" id="LN999943">
    <property type="protein sequence ID" value="CZT98120.1"/>
    <property type="molecule type" value="Genomic_DNA"/>
</dbReference>
<dbReference type="RefSeq" id="XP_001349613.1">
    <property type="nucleotide sequence ID" value="XM_001349577.1"/>
</dbReference>
<dbReference type="SMR" id="O96188"/>
<dbReference type="STRING" id="36329.O96188"/>
<dbReference type="SwissPalm" id="O96188"/>
<dbReference type="PaxDb" id="5833-PFB0475c"/>
<dbReference type="EnsemblProtists" id="CZT98120">
    <property type="protein sequence ID" value="CZT98120"/>
    <property type="gene ID" value="PF3D7_0210600"/>
</dbReference>
<dbReference type="GeneID" id="812695"/>
<dbReference type="KEGG" id="pfa:PF3D7_0210600"/>
<dbReference type="VEuPathDB" id="PlasmoDB:PF3D7_0210600"/>
<dbReference type="HOGENOM" id="CLU_614653_0_0_1"/>
<dbReference type="InParanoid" id="O96188"/>
<dbReference type="OMA" id="IHHINLK"/>
<dbReference type="OrthoDB" id="391416at2759"/>
<dbReference type="PhylomeDB" id="O96188"/>
<dbReference type="Proteomes" id="UP000001450">
    <property type="component" value="Chromosome 2"/>
</dbReference>
<dbReference type="GO" id="GO:0031410">
    <property type="term" value="C:cytoplasmic vesicle"/>
    <property type="evidence" value="ECO:0007669"/>
    <property type="project" value="UniProtKB-KW"/>
</dbReference>
<dbReference type="GO" id="GO:0033016">
    <property type="term" value="C:rhoptry membrane"/>
    <property type="evidence" value="ECO:0007669"/>
    <property type="project" value="UniProtKB-SubCell"/>
</dbReference>
<dbReference type="InterPro" id="IPR056293">
    <property type="entry name" value="PH_CERLI1"/>
</dbReference>
<dbReference type="Pfam" id="PF23634">
    <property type="entry name" value="PH_CERLI1"/>
    <property type="match status" value="1"/>
</dbReference>
<protein>
    <recommendedName>
        <fullName evidence="6">Rhoptry surface protein CERLI1</fullName>
    </recommendedName>
    <alternativeName>
        <fullName evidence="5">Cytosolically exposed rhoptry leaflet interacting protein 1</fullName>
        <shortName evidence="5">PfCERLI1</shortName>
    </alternativeName>
    <alternativeName>
        <fullName evidence="4">Rhoptry apical surface protein 2</fullName>
        <shortName evidence="4">PfRASP2</shortName>
    </alternativeName>
</protein>
<evidence type="ECO:0000250" key="1">
    <source>
        <dbReference type="UniProtKB" id="S7UMJ0"/>
    </source>
</evidence>
<evidence type="ECO:0000269" key="2">
    <source>
    </source>
</evidence>
<evidence type="ECO:0000269" key="3">
    <source>
    </source>
</evidence>
<evidence type="ECO:0000303" key="4">
    <source>
    </source>
</evidence>
<evidence type="ECO:0000303" key="5">
    <source>
    </source>
</evidence>
<evidence type="ECO:0000305" key="6"/>
<evidence type="ECO:0000312" key="7">
    <source>
        <dbReference type="EMBL" id="CZT98120.1"/>
    </source>
</evidence>
<evidence type="ECO:0000312" key="8">
    <source>
        <dbReference type="Proteomes" id="UP000001450"/>
    </source>
</evidence>
<proteinExistence type="evidence at protein level"/>
<accession>O96188</accession>
<organism evidence="8">
    <name type="scientific">Plasmodium falciparum (isolate 3D7)</name>
    <dbReference type="NCBI Taxonomy" id="36329"/>
    <lineage>
        <taxon>Eukaryota</taxon>
        <taxon>Sar</taxon>
        <taxon>Alveolata</taxon>
        <taxon>Apicomplexa</taxon>
        <taxon>Aconoidasida</taxon>
        <taxon>Haemosporida</taxon>
        <taxon>Plasmodiidae</taxon>
        <taxon>Plasmodium</taxon>
        <taxon>Plasmodium (Laverania)</taxon>
    </lineage>
</organism>
<name>CERI1_PLAF7</name>
<feature type="chain" id="PRO_0000456207" description="Rhoptry surface protein CERLI1">
    <location>
        <begin position="1"/>
        <end position="446"/>
    </location>
</feature>
<feature type="domain" description="C2" evidence="1">
    <location>
        <begin position="39"/>
        <end position="208"/>
    </location>
</feature>
<feature type="domain" description="PH" evidence="1">
    <location>
        <begin position="252"/>
        <end position="363"/>
    </location>
</feature>
<sequence>MFYLDTHNILYLGSCLLASVCTLCICRNRELFPHISENKPIGQLYRLMNIHKYESFSIIIQIHHLNLKFGDDDNAKFIVHLKIGNRYAYTHYHKQYQNKVHIEERKNMVVKQNNNTLRLEVYKKGTLKNTFFGSAEIHIYSEIVKKLFPCNVYFNITNKNQIVGTACLSFHYINLDCIKKDDQIYTSLFIETIISVQKNQTKNNEKIEKLIDEGKEHFEAIKETDLSTTIYKNISNLVLEDKIRLFCKNLNGYLLHSNFYIKRFYNKYYFYLHFFKGKFYWCYYNEEADAKMDKNRVGYVRLEYVANVYSDVYSHKYFYIKYRKKNERKENYLYLKTIDKDRNIWVNIIHDFIILVSNYKRERKNKKYKIKEFKDNLIEDTPKEILEINKTLSRSLSNNSMKNKYLDKKKKVEVLSDMDNEENYMNSGDLGPVFKDMSKNMYNYSD</sequence>
<comment type="function">
    <text evidence="2 3">Essential for merozoite invasion of host cells by controlling rhoptry secretion (PubMed:31492901, PubMed:32179747). Binds to phosphatidic acid (PA) and phosphatidylinositol 4,5-bisphosphate (PIP2) lipids and thus, likely contributes to the assembly of the machinery that docks or primes the rhoptry to the parasite cell membrane prior to the fusion with the host cell membrane (PubMed:31492901).</text>
</comment>
<comment type="subcellular location">
    <subcellularLocation>
        <location evidence="2 3">Cytoplasmic vesicle</location>
        <location evidence="2 3">Secretory vesicle</location>
        <location evidence="2 3">Rhoptry membrane</location>
        <topology evidence="3">Peripheral membrane protein</topology>
        <orientation evidence="3">Cytoplasmic side</orientation>
    </subcellularLocation>
    <text evidence="2 3">Localizes to the neck (apical part) of rhoptries in merozoites (PubMed:31492901). In the mature merozoite, localizes to the cytosolic face of the rhoptry bulb membrane (PubMed:32179747).</text>
</comment>
<comment type="developmental stage">
    <text evidence="2 3">During parasite asexual blood stages, expressed at the late schizont stage and in free merozoites (at protein level).</text>
</comment>
<comment type="domain">
    <text evidence="1">The C2 domain is a non-calcium binding domain (By similarity). Cooperates with the PH domain in the binding to phosphatidic acid (PA) and phosphatidylinositol 4,5-bisphosphate (PIP2) (By similarity).</text>
</comment>
<comment type="domain">
    <text evidence="1">The PH domain cooperates with the C2 domain in the binding to phosphatidic acid (PA) and phosphatidylinositol 4,5-bisphosphate (PIP2).</text>
</comment>
<comment type="disruption phenotype">
    <text evidence="2 3">Conditional knockout at the ring stage has no effect on parasite development during the first cycle and merozoites egress normally from host erythrocytes. However, these merozoites are unable to reinvade new erythrocytes (PubMed:31492901, PubMed:32179747). Impaired rhoptry secretion during merozoite invasion of host erythrocytes (PubMed:31492901, PubMed:32179747). Increases the spatial segregation between rhoptry neck protein RON4 and bulb protein RAP1, and impairs RAP1 processing (PubMed:32179747). No effect on rhoptry morphology (PubMed:31492901, PubMed:32179747). Microneme secretion is not affected (PubMed:31492901).</text>
</comment>